<evidence type="ECO:0000255" key="1">
    <source>
        <dbReference type="HAMAP-Rule" id="MF_00549"/>
    </source>
</evidence>
<organism>
    <name type="scientific">Escherichia coli O9:H4 (strain HS)</name>
    <dbReference type="NCBI Taxonomy" id="331112"/>
    <lineage>
        <taxon>Bacteria</taxon>
        <taxon>Pseudomonadati</taxon>
        <taxon>Pseudomonadota</taxon>
        <taxon>Gammaproteobacteria</taxon>
        <taxon>Enterobacterales</taxon>
        <taxon>Enterobacteriaceae</taxon>
        <taxon>Escherichia</taxon>
    </lineage>
</organism>
<sequence>MELTTRTLPARKHIALVAHDHCKQMLMSWVERHQPLLEQHVLYATGTTGNLISRATGMNVNAMLSGPMGGDQQVGALISEGKIDVLIFFWDPLNAVPHDPDVKALLRLATVWNIPVATNVATADFIIQSPHFNDAVDILIPDYQRYLADRLK</sequence>
<reference key="1">
    <citation type="journal article" date="2008" name="J. Bacteriol.">
        <title>The pangenome structure of Escherichia coli: comparative genomic analysis of E. coli commensal and pathogenic isolates.</title>
        <authorList>
            <person name="Rasko D.A."/>
            <person name="Rosovitz M.J."/>
            <person name="Myers G.S.A."/>
            <person name="Mongodin E.F."/>
            <person name="Fricke W.F."/>
            <person name="Gajer P."/>
            <person name="Crabtree J."/>
            <person name="Sebaihia M."/>
            <person name="Thomson N.R."/>
            <person name="Chaudhuri R."/>
            <person name="Henderson I.R."/>
            <person name="Sperandio V."/>
            <person name="Ravel J."/>
        </authorList>
    </citation>
    <scope>NUCLEOTIDE SEQUENCE [LARGE SCALE GENOMIC DNA]</scope>
    <source>
        <strain>HS</strain>
    </source>
</reference>
<name>MGSA_ECOHS</name>
<accession>A7ZYR5</accession>
<protein>
    <recommendedName>
        <fullName evidence="1">Methylglyoxal synthase</fullName>
        <shortName evidence="1">MGS</shortName>
        <ecNumber evidence="1">4.2.3.3</ecNumber>
    </recommendedName>
</protein>
<feature type="chain" id="PRO_1000061088" description="Methylglyoxal synthase">
    <location>
        <begin position="1"/>
        <end position="152"/>
    </location>
</feature>
<feature type="domain" description="MGS-like" evidence="1">
    <location>
        <begin position="6"/>
        <end position="152"/>
    </location>
</feature>
<feature type="active site" description="Proton donor/acceptor" evidence="1">
    <location>
        <position position="71"/>
    </location>
</feature>
<feature type="binding site" evidence="1">
    <location>
        <position position="19"/>
    </location>
    <ligand>
        <name>substrate</name>
    </ligand>
</feature>
<feature type="binding site" evidence="1">
    <location>
        <position position="23"/>
    </location>
    <ligand>
        <name>substrate</name>
    </ligand>
</feature>
<feature type="binding site" evidence="1">
    <location>
        <begin position="45"/>
        <end position="48"/>
    </location>
    <ligand>
        <name>substrate</name>
    </ligand>
</feature>
<feature type="binding site" evidence="1">
    <location>
        <begin position="65"/>
        <end position="66"/>
    </location>
    <ligand>
        <name>substrate</name>
    </ligand>
</feature>
<feature type="binding site" evidence="1">
    <location>
        <position position="98"/>
    </location>
    <ligand>
        <name>substrate</name>
    </ligand>
</feature>
<keyword id="KW-0456">Lyase</keyword>
<dbReference type="EC" id="4.2.3.3" evidence="1"/>
<dbReference type="EMBL" id="CP000802">
    <property type="protein sequence ID" value="ABV05419.1"/>
    <property type="molecule type" value="Genomic_DNA"/>
</dbReference>
<dbReference type="RefSeq" id="WP_000424181.1">
    <property type="nucleotide sequence ID" value="NC_009800.1"/>
</dbReference>
<dbReference type="SMR" id="A7ZYR5"/>
<dbReference type="GeneID" id="93776451"/>
<dbReference type="KEGG" id="ecx:EcHS_A1072"/>
<dbReference type="HOGENOM" id="CLU_120420_0_1_6"/>
<dbReference type="GO" id="GO:0005829">
    <property type="term" value="C:cytosol"/>
    <property type="evidence" value="ECO:0007669"/>
    <property type="project" value="TreeGrafter"/>
</dbReference>
<dbReference type="GO" id="GO:0008929">
    <property type="term" value="F:methylglyoxal synthase activity"/>
    <property type="evidence" value="ECO:0007669"/>
    <property type="project" value="UniProtKB-UniRule"/>
</dbReference>
<dbReference type="GO" id="GO:0019242">
    <property type="term" value="P:methylglyoxal biosynthetic process"/>
    <property type="evidence" value="ECO:0007669"/>
    <property type="project" value="UniProtKB-UniRule"/>
</dbReference>
<dbReference type="CDD" id="cd01422">
    <property type="entry name" value="MGS"/>
    <property type="match status" value="1"/>
</dbReference>
<dbReference type="FunFam" id="3.40.50.1380:FF:000002">
    <property type="entry name" value="Methylglyoxal synthase"/>
    <property type="match status" value="1"/>
</dbReference>
<dbReference type="Gene3D" id="3.40.50.1380">
    <property type="entry name" value="Methylglyoxal synthase-like domain"/>
    <property type="match status" value="1"/>
</dbReference>
<dbReference type="HAMAP" id="MF_00549">
    <property type="entry name" value="Methylglyoxal_synth"/>
    <property type="match status" value="1"/>
</dbReference>
<dbReference type="InterPro" id="IPR004363">
    <property type="entry name" value="Methylgl_synth"/>
</dbReference>
<dbReference type="InterPro" id="IPR018148">
    <property type="entry name" value="Methylglyoxal_synth_AS"/>
</dbReference>
<dbReference type="InterPro" id="IPR011607">
    <property type="entry name" value="MGS-like_dom"/>
</dbReference>
<dbReference type="InterPro" id="IPR036914">
    <property type="entry name" value="MGS-like_dom_sf"/>
</dbReference>
<dbReference type="NCBIfam" id="TIGR00160">
    <property type="entry name" value="MGSA"/>
    <property type="match status" value="1"/>
</dbReference>
<dbReference type="NCBIfam" id="NF003559">
    <property type="entry name" value="PRK05234.1"/>
    <property type="match status" value="1"/>
</dbReference>
<dbReference type="PANTHER" id="PTHR30492">
    <property type="entry name" value="METHYLGLYOXAL SYNTHASE"/>
    <property type="match status" value="1"/>
</dbReference>
<dbReference type="PANTHER" id="PTHR30492:SF0">
    <property type="entry name" value="METHYLGLYOXAL SYNTHASE"/>
    <property type="match status" value="1"/>
</dbReference>
<dbReference type="Pfam" id="PF02142">
    <property type="entry name" value="MGS"/>
    <property type="match status" value="1"/>
</dbReference>
<dbReference type="PIRSF" id="PIRSF006614">
    <property type="entry name" value="Methylglyox_syn"/>
    <property type="match status" value="1"/>
</dbReference>
<dbReference type="SMART" id="SM00851">
    <property type="entry name" value="MGS"/>
    <property type="match status" value="1"/>
</dbReference>
<dbReference type="SUPFAM" id="SSF52335">
    <property type="entry name" value="Methylglyoxal synthase-like"/>
    <property type="match status" value="1"/>
</dbReference>
<dbReference type="PROSITE" id="PS01335">
    <property type="entry name" value="METHYLGLYOXAL_SYNTH"/>
    <property type="match status" value="1"/>
</dbReference>
<dbReference type="PROSITE" id="PS51855">
    <property type="entry name" value="MGS"/>
    <property type="match status" value="1"/>
</dbReference>
<proteinExistence type="inferred from homology"/>
<gene>
    <name evidence="1" type="primary">mgsA</name>
    <name type="ordered locus">EcHS_A1072</name>
</gene>
<comment type="function">
    <text evidence="1">Catalyzes the formation of methylglyoxal from dihydroxyacetone phosphate.</text>
</comment>
<comment type="catalytic activity">
    <reaction evidence="1">
        <text>dihydroxyacetone phosphate = methylglyoxal + phosphate</text>
        <dbReference type="Rhea" id="RHEA:17937"/>
        <dbReference type="ChEBI" id="CHEBI:17158"/>
        <dbReference type="ChEBI" id="CHEBI:43474"/>
        <dbReference type="ChEBI" id="CHEBI:57642"/>
        <dbReference type="EC" id="4.2.3.3"/>
    </reaction>
</comment>
<comment type="similarity">
    <text evidence="1">Belongs to the methylglyoxal synthase family.</text>
</comment>